<feature type="chain" id="PRO_1000131927" description="Leucyl/phenylalanyl-tRNA--protein transferase">
    <location>
        <begin position="1"/>
        <end position="234"/>
    </location>
</feature>
<gene>
    <name evidence="1" type="primary">aat</name>
    <name type="ordered locus">EFER_1033</name>
</gene>
<reference key="1">
    <citation type="journal article" date="2009" name="PLoS Genet.">
        <title>Organised genome dynamics in the Escherichia coli species results in highly diverse adaptive paths.</title>
        <authorList>
            <person name="Touchon M."/>
            <person name="Hoede C."/>
            <person name="Tenaillon O."/>
            <person name="Barbe V."/>
            <person name="Baeriswyl S."/>
            <person name="Bidet P."/>
            <person name="Bingen E."/>
            <person name="Bonacorsi S."/>
            <person name="Bouchier C."/>
            <person name="Bouvet O."/>
            <person name="Calteau A."/>
            <person name="Chiapello H."/>
            <person name="Clermont O."/>
            <person name="Cruveiller S."/>
            <person name="Danchin A."/>
            <person name="Diard M."/>
            <person name="Dossat C."/>
            <person name="Karoui M.E."/>
            <person name="Frapy E."/>
            <person name="Garry L."/>
            <person name="Ghigo J.M."/>
            <person name="Gilles A.M."/>
            <person name="Johnson J."/>
            <person name="Le Bouguenec C."/>
            <person name="Lescat M."/>
            <person name="Mangenot S."/>
            <person name="Martinez-Jehanne V."/>
            <person name="Matic I."/>
            <person name="Nassif X."/>
            <person name="Oztas S."/>
            <person name="Petit M.A."/>
            <person name="Pichon C."/>
            <person name="Rouy Z."/>
            <person name="Ruf C.S."/>
            <person name="Schneider D."/>
            <person name="Tourret J."/>
            <person name="Vacherie B."/>
            <person name="Vallenet D."/>
            <person name="Medigue C."/>
            <person name="Rocha E.P.C."/>
            <person name="Denamur E."/>
        </authorList>
    </citation>
    <scope>NUCLEOTIDE SEQUENCE [LARGE SCALE GENOMIC DNA]</scope>
    <source>
        <strain>ATCC 35469 / DSM 13698 / BCRC 15582 / CCUG 18766 / IAM 14443 / JCM 21226 / LMG 7866 / NBRC 102419 / NCTC 12128 / CDC 0568-73</strain>
    </source>
</reference>
<sequence>MRLVQLSRHSIAFPSPEGALREPNGLLALGGDLSPTRLLMAYQRGIFPWFSPGDPILWWSPDPRAVLWPESLHISRSMKRFHKRSPYRVTMNYAFGQVIEGCASDREEGTWITRGVVEAYHRLHELGHAHSIEVWRKDELVGGMYGVAQGTLFCGESMFSRMENASKTALLVFCDEFIRHGGKLIDCQVLNDHTASLGACEIPRRDYLNYLNQMRLGRLPNNFWVPRCLFSPQE</sequence>
<organism>
    <name type="scientific">Escherichia fergusonii (strain ATCC 35469 / DSM 13698 / CCUG 18766 / IAM 14443 / JCM 21226 / LMG 7866 / NBRC 102419 / NCTC 12128 / CDC 0568-73)</name>
    <dbReference type="NCBI Taxonomy" id="585054"/>
    <lineage>
        <taxon>Bacteria</taxon>
        <taxon>Pseudomonadati</taxon>
        <taxon>Pseudomonadota</taxon>
        <taxon>Gammaproteobacteria</taxon>
        <taxon>Enterobacterales</taxon>
        <taxon>Enterobacteriaceae</taxon>
        <taxon>Escherichia</taxon>
    </lineage>
</organism>
<dbReference type="EC" id="2.3.2.6" evidence="1"/>
<dbReference type="EMBL" id="CU928158">
    <property type="protein sequence ID" value="CAQ88564.1"/>
    <property type="molecule type" value="Genomic_DNA"/>
</dbReference>
<dbReference type="RefSeq" id="WP_001241696.1">
    <property type="nucleotide sequence ID" value="NC_011740.1"/>
</dbReference>
<dbReference type="SMR" id="B7LN53"/>
<dbReference type="GeneID" id="75057915"/>
<dbReference type="KEGG" id="efe:EFER_1033"/>
<dbReference type="HOGENOM" id="CLU_075045_0_0_6"/>
<dbReference type="OrthoDB" id="9790282at2"/>
<dbReference type="Proteomes" id="UP000000745">
    <property type="component" value="Chromosome"/>
</dbReference>
<dbReference type="GO" id="GO:0005737">
    <property type="term" value="C:cytoplasm"/>
    <property type="evidence" value="ECO:0007669"/>
    <property type="project" value="UniProtKB-SubCell"/>
</dbReference>
<dbReference type="GO" id="GO:0008914">
    <property type="term" value="F:leucyl-tRNA--protein transferase activity"/>
    <property type="evidence" value="ECO:0007669"/>
    <property type="project" value="UniProtKB-UniRule"/>
</dbReference>
<dbReference type="GO" id="GO:0030163">
    <property type="term" value="P:protein catabolic process"/>
    <property type="evidence" value="ECO:0007669"/>
    <property type="project" value="UniProtKB-UniRule"/>
</dbReference>
<dbReference type="FunFam" id="3.30.70.3550:FF:000001">
    <property type="entry name" value="Leucyl/phenylalanyl-tRNA--protein transferase"/>
    <property type="match status" value="1"/>
</dbReference>
<dbReference type="FunFam" id="3.40.630.70:FF:000001">
    <property type="entry name" value="Leucyl/phenylalanyl-tRNA--protein transferase"/>
    <property type="match status" value="1"/>
</dbReference>
<dbReference type="Gene3D" id="3.40.630.70">
    <property type="entry name" value="Leucyl/phenylalanyl-tRNA-protein transferase, C-terminal domain"/>
    <property type="match status" value="1"/>
</dbReference>
<dbReference type="Gene3D" id="3.30.70.3550">
    <property type="entry name" value="Leucyl/phenylalanyl-tRNA-protein transferase, N-terminal domain"/>
    <property type="match status" value="1"/>
</dbReference>
<dbReference type="HAMAP" id="MF_00688">
    <property type="entry name" value="Leu_Phe_trans"/>
    <property type="match status" value="1"/>
</dbReference>
<dbReference type="InterPro" id="IPR016181">
    <property type="entry name" value="Acyl_CoA_acyltransferase"/>
</dbReference>
<dbReference type="InterPro" id="IPR004616">
    <property type="entry name" value="Leu/Phe-tRNA_Trfase"/>
</dbReference>
<dbReference type="InterPro" id="IPR042203">
    <property type="entry name" value="Leu/Phe-tRNA_Trfase_C"/>
</dbReference>
<dbReference type="InterPro" id="IPR042221">
    <property type="entry name" value="Leu/Phe-tRNA_Trfase_N"/>
</dbReference>
<dbReference type="NCBIfam" id="TIGR00667">
    <property type="entry name" value="aat"/>
    <property type="match status" value="1"/>
</dbReference>
<dbReference type="PANTHER" id="PTHR30098">
    <property type="entry name" value="LEUCYL/PHENYLALANYL-TRNA--PROTEIN TRANSFERASE"/>
    <property type="match status" value="1"/>
</dbReference>
<dbReference type="PANTHER" id="PTHR30098:SF2">
    <property type="entry name" value="LEUCYL_PHENYLALANYL-TRNA--PROTEIN TRANSFERASE"/>
    <property type="match status" value="1"/>
</dbReference>
<dbReference type="Pfam" id="PF03588">
    <property type="entry name" value="Leu_Phe_trans"/>
    <property type="match status" value="1"/>
</dbReference>
<dbReference type="SUPFAM" id="SSF55729">
    <property type="entry name" value="Acyl-CoA N-acyltransferases (Nat)"/>
    <property type="match status" value="1"/>
</dbReference>
<evidence type="ECO:0000255" key="1">
    <source>
        <dbReference type="HAMAP-Rule" id="MF_00688"/>
    </source>
</evidence>
<keyword id="KW-0012">Acyltransferase</keyword>
<keyword id="KW-0963">Cytoplasm</keyword>
<keyword id="KW-0808">Transferase</keyword>
<proteinExistence type="inferred from homology"/>
<protein>
    <recommendedName>
        <fullName evidence="1">Leucyl/phenylalanyl-tRNA--protein transferase</fullName>
        <ecNumber evidence="1">2.3.2.6</ecNumber>
    </recommendedName>
    <alternativeName>
        <fullName evidence="1">L/F-transferase</fullName>
    </alternativeName>
    <alternativeName>
        <fullName evidence="1">Leucyltransferase</fullName>
    </alternativeName>
    <alternativeName>
        <fullName evidence="1">Phenyalanyltransferase</fullName>
    </alternativeName>
</protein>
<accession>B7LN53</accession>
<name>LFTR_ESCF3</name>
<comment type="function">
    <text evidence="1">Functions in the N-end rule pathway of protein degradation where it conjugates Leu, Phe and, less efficiently, Met from aminoacyl-tRNAs to the N-termini of proteins containing an N-terminal arginine or lysine.</text>
</comment>
<comment type="catalytic activity">
    <reaction evidence="1">
        <text>N-terminal L-lysyl-[protein] + L-leucyl-tRNA(Leu) = N-terminal L-leucyl-L-lysyl-[protein] + tRNA(Leu) + H(+)</text>
        <dbReference type="Rhea" id="RHEA:12340"/>
        <dbReference type="Rhea" id="RHEA-COMP:9613"/>
        <dbReference type="Rhea" id="RHEA-COMP:9622"/>
        <dbReference type="Rhea" id="RHEA-COMP:12670"/>
        <dbReference type="Rhea" id="RHEA-COMP:12671"/>
        <dbReference type="ChEBI" id="CHEBI:15378"/>
        <dbReference type="ChEBI" id="CHEBI:65249"/>
        <dbReference type="ChEBI" id="CHEBI:78442"/>
        <dbReference type="ChEBI" id="CHEBI:78494"/>
        <dbReference type="ChEBI" id="CHEBI:133043"/>
        <dbReference type="EC" id="2.3.2.6"/>
    </reaction>
</comment>
<comment type="catalytic activity">
    <reaction evidence="1">
        <text>N-terminal L-arginyl-[protein] + L-leucyl-tRNA(Leu) = N-terminal L-leucyl-L-arginyl-[protein] + tRNA(Leu) + H(+)</text>
        <dbReference type="Rhea" id="RHEA:50416"/>
        <dbReference type="Rhea" id="RHEA-COMP:9613"/>
        <dbReference type="Rhea" id="RHEA-COMP:9622"/>
        <dbReference type="Rhea" id="RHEA-COMP:12672"/>
        <dbReference type="Rhea" id="RHEA-COMP:12673"/>
        <dbReference type="ChEBI" id="CHEBI:15378"/>
        <dbReference type="ChEBI" id="CHEBI:64719"/>
        <dbReference type="ChEBI" id="CHEBI:78442"/>
        <dbReference type="ChEBI" id="CHEBI:78494"/>
        <dbReference type="ChEBI" id="CHEBI:133044"/>
        <dbReference type="EC" id="2.3.2.6"/>
    </reaction>
</comment>
<comment type="catalytic activity">
    <reaction evidence="1">
        <text>L-phenylalanyl-tRNA(Phe) + an N-terminal L-alpha-aminoacyl-[protein] = an N-terminal L-phenylalanyl-L-alpha-aminoacyl-[protein] + tRNA(Phe)</text>
        <dbReference type="Rhea" id="RHEA:43632"/>
        <dbReference type="Rhea" id="RHEA-COMP:9668"/>
        <dbReference type="Rhea" id="RHEA-COMP:9699"/>
        <dbReference type="Rhea" id="RHEA-COMP:10636"/>
        <dbReference type="Rhea" id="RHEA-COMP:10637"/>
        <dbReference type="ChEBI" id="CHEBI:78442"/>
        <dbReference type="ChEBI" id="CHEBI:78531"/>
        <dbReference type="ChEBI" id="CHEBI:78597"/>
        <dbReference type="ChEBI" id="CHEBI:83561"/>
        <dbReference type="EC" id="2.3.2.6"/>
    </reaction>
</comment>
<comment type="subcellular location">
    <subcellularLocation>
        <location evidence="1">Cytoplasm</location>
    </subcellularLocation>
</comment>
<comment type="similarity">
    <text evidence="1">Belongs to the L/F-transferase family.</text>
</comment>